<accession>B5FAX9</accession>
<organism>
    <name type="scientific">Aliivibrio fischeri (strain MJ11)</name>
    <name type="common">Vibrio fischeri</name>
    <dbReference type="NCBI Taxonomy" id="388396"/>
    <lineage>
        <taxon>Bacteria</taxon>
        <taxon>Pseudomonadati</taxon>
        <taxon>Pseudomonadota</taxon>
        <taxon>Gammaproteobacteria</taxon>
        <taxon>Vibrionales</taxon>
        <taxon>Vibrionaceae</taxon>
        <taxon>Aliivibrio</taxon>
    </lineage>
</organism>
<name>EX7L_ALIFM</name>
<dbReference type="EC" id="3.1.11.6" evidence="1"/>
<dbReference type="EMBL" id="CP001139">
    <property type="protein sequence ID" value="ACH65762.1"/>
    <property type="molecule type" value="Genomic_DNA"/>
</dbReference>
<dbReference type="RefSeq" id="WP_012533268.1">
    <property type="nucleotide sequence ID" value="NC_011184.1"/>
</dbReference>
<dbReference type="SMR" id="B5FAX9"/>
<dbReference type="KEGG" id="vfm:VFMJ11_0650"/>
<dbReference type="HOGENOM" id="CLU_023625_3_1_6"/>
<dbReference type="Proteomes" id="UP000001857">
    <property type="component" value="Chromosome I"/>
</dbReference>
<dbReference type="GO" id="GO:0005737">
    <property type="term" value="C:cytoplasm"/>
    <property type="evidence" value="ECO:0007669"/>
    <property type="project" value="UniProtKB-SubCell"/>
</dbReference>
<dbReference type="GO" id="GO:0009318">
    <property type="term" value="C:exodeoxyribonuclease VII complex"/>
    <property type="evidence" value="ECO:0007669"/>
    <property type="project" value="InterPro"/>
</dbReference>
<dbReference type="GO" id="GO:0008855">
    <property type="term" value="F:exodeoxyribonuclease VII activity"/>
    <property type="evidence" value="ECO:0007669"/>
    <property type="project" value="UniProtKB-UniRule"/>
</dbReference>
<dbReference type="GO" id="GO:0003676">
    <property type="term" value="F:nucleic acid binding"/>
    <property type="evidence" value="ECO:0007669"/>
    <property type="project" value="InterPro"/>
</dbReference>
<dbReference type="GO" id="GO:0006308">
    <property type="term" value="P:DNA catabolic process"/>
    <property type="evidence" value="ECO:0007669"/>
    <property type="project" value="UniProtKB-UniRule"/>
</dbReference>
<dbReference type="CDD" id="cd04489">
    <property type="entry name" value="ExoVII_LU_OBF"/>
    <property type="match status" value="1"/>
</dbReference>
<dbReference type="HAMAP" id="MF_00378">
    <property type="entry name" value="Exonuc_7_L"/>
    <property type="match status" value="1"/>
</dbReference>
<dbReference type="InterPro" id="IPR003753">
    <property type="entry name" value="Exonuc_VII_L"/>
</dbReference>
<dbReference type="InterPro" id="IPR020579">
    <property type="entry name" value="Exonuc_VII_lsu_C"/>
</dbReference>
<dbReference type="InterPro" id="IPR025824">
    <property type="entry name" value="OB-fold_nuc-bd_dom"/>
</dbReference>
<dbReference type="NCBIfam" id="TIGR00237">
    <property type="entry name" value="xseA"/>
    <property type="match status" value="1"/>
</dbReference>
<dbReference type="PANTHER" id="PTHR30008">
    <property type="entry name" value="EXODEOXYRIBONUCLEASE 7 LARGE SUBUNIT"/>
    <property type="match status" value="1"/>
</dbReference>
<dbReference type="PANTHER" id="PTHR30008:SF0">
    <property type="entry name" value="EXODEOXYRIBONUCLEASE 7 LARGE SUBUNIT"/>
    <property type="match status" value="1"/>
</dbReference>
<dbReference type="Pfam" id="PF02601">
    <property type="entry name" value="Exonuc_VII_L"/>
    <property type="match status" value="1"/>
</dbReference>
<dbReference type="Pfam" id="PF13742">
    <property type="entry name" value="tRNA_anti_2"/>
    <property type="match status" value="1"/>
</dbReference>
<comment type="function">
    <text evidence="1">Bidirectionally degrades single-stranded DNA into large acid-insoluble oligonucleotides, which are then degraded further into small acid-soluble oligonucleotides.</text>
</comment>
<comment type="catalytic activity">
    <reaction evidence="1">
        <text>Exonucleolytic cleavage in either 5'- to 3'- or 3'- to 5'-direction to yield nucleoside 5'-phosphates.</text>
        <dbReference type="EC" id="3.1.11.6"/>
    </reaction>
</comment>
<comment type="subunit">
    <text evidence="1">Heterooligomer composed of large and small subunits.</text>
</comment>
<comment type="subcellular location">
    <subcellularLocation>
        <location evidence="1">Cytoplasm</location>
    </subcellularLocation>
</comment>
<comment type="similarity">
    <text evidence="1">Belongs to the XseA family.</text>
</comment>
<gene>
    <name evidence="1" type="primary">xseA</name>
    <name type="ordered locus">VFMJ11_0650</name>
</gene>
<reference key="1">
    <citation type="submission" date="2008-08" db="EMBL/GenBank/DDBJ databases">
        <title>Complete sequence of Vibrio fischeri strain MJ11.</title>
        <authorList>
            <person name="Mandel M.J."/>
            <person name="Stabb E.V."/>
            <person name="Ruby E.G."/>
            <person name="Ferriera S."/>
            <person name="Johnson J."/>
            <person name="Kravitz S."/>
            <person name="Beeson K."/>
            <person name="Sutton G."/>
            <person name="Rogers Y.-H."/>
            <person name="Friedman R."/>
            <person name="Frazier M."/>
            <person name="Venter J.C."/>
        </authorList>
    </citation>
    <scope>NUCLEOTIDE SEQUENCE [LARGE SCALE GENOMIC DNA]</scope>
    <source>
        <strain>MJ11</strain>
    </source>
</reference>
<feature type="chain" id="PRO_1000122100" description="Exodeoxyribonuclease 7 large subunit">
    <location>
        <begin position="1"/>
        <end position="449"/>
    </location>
</feature>
<evidence type="ECO:0000255" key="1">
    <source>
        <dbReference type="HAMAP-Rule" id="MF_00378"/>
    </source>
</evidence>
<protein>
    <recommendedName>
        <fullName evidence="1">Exodeoxyribonuclease 7 large subunit</fullName>
        <ecNumber evidence="1">3.1.11.6</ecNumber>
    </recommendedName>
    <alternativeName>
        <fullName evidence="1">Exodeoxyribonuclease VII large subunit</fullName>
        <shortName evidence="1">Exonuclease VII large subunit</shortName>
    </alternativeName>
</protein>
<proteinExistence type="inferred from homology"/>
<sequence>MSLDSNPRIFTVSRLNAEVRLLLENEMGIVWLVGEISNLTVPVSGHWYLTLKDSQAQVKCAMFKGNNRRVTFKPQNGKQVLVKARLSLYEPRGDYQLIIESMQPEGDGRLQQEFDQLKMSLAAEGLFAQTAKKTLPEQPKRVGIITSQTGAALFDILHVLKRRDPNLPVVIYPTMVQGSGAAIQIAQAIGRANSRNECDILIVGRGGGSLEDLWCFNEEIVARTIAASEIPIVSAVGHEIDVTIADFVADVRAPTPSAAAELVSRDLSAQLQTVAHQKRRLNSAMERYLSHQQRSLSAYQHRIEKQHPQMQLNNQSQRLDDLNQRLMNHIQQRLQRQQYRVENLTLRLNNLSPTKRISQDKLHIEELKRRLLDSMDRNLLMQRHQLALAAEKLDTVSPLATLMRGYSITHNQDGKVITSTKQVELGDNITTRFADGDITSTVTKASELS</sequence>
<keyword id="KW-0963">Cytoplasm</keyword>
<keyword id="KW-0269">Exonuclease</keyword>
<keyword id="KW-0378">Hydrolase</keyword>
<keyword id="KW-0540">Nuclease</keyword>